<protein>
    <recommendedName>
        <fullName>Glucomannokinase</fullName>
    </recommendedName>
    <domain>
        <recommendedName>
            <fullName>Glucokinase</fullName>
            <ecNumber>2.7.1.2</ecNumber>
        </recommendedName>
    </domain>
    <domain>
        <recommendedName>
            <fullName>Mannokinase</fullName>
            <ecNumber>2.7.1.7</ecNumber>
        </recommendedName>
    </domain>
</protein>
<comment type="function">
    <text>The enzyme has great affinity for glucose and mannose.</text>
</comment>
<comment type="catalytic activity">
    <reaction>
        <text>D-glucose + ATP = D-glucose 6-phosphate + ADP + H(+)</text>
        <dbReference type="Rhea" id="RHEA:17825"/>
        <dbReference type="ChEBI" id="CHEBI:4167"/>
        <dbReference type="ChEBI" id="CHEBI:15378"/>
        <dbReference type="ChEBI" id="CHEBI:30616"/>
        <dbReference type="ChEBI" id="CHEBI:61548"/>
        <dbReference type="ChEBI" id="CHEBI:456216"/>
        <dbReference type="EC" id="2.7.1.2"/>
    </reaction>
</comment>
<comment type="catalytic activity">
    <reaction>
        <text>D-mannose + ATP = D-mannose 6-phosphate + ADP + H(+)</text>
        <dbReference type="Rhea" id="RHEA:11028"/>
        <dbReference type="ChEBI" id="CHEBI:4208"/>
        <dbReference type="ChEBI" id="CHEBI:15378"/>
        <dbReference type="ChEBI" id="CHEBI:30616"/>
        <dbReference type="ChEBI" id="CHEBI:58735"/>
        <dbReference type="ChEBI" id="CHEBI:456216"/>
        <dbReference type="EC" id="2.7.1.7"/>
    </reaction>
</comment>
<comment type="activity regulation">
    <text>Competitively inhibited by 2-deoxy-glucose.</text>
</comment>
<comment type="pathway">
    <text>Carbohydrate degradation; glycolysis; D-glyceraldehyde 3-phosphate and glycerone phosphate from D-glucose: step 1/4.</text>
</comment>
<comment type="pathway">
    <text>Carbohydrate metabolism; mannose metabolism.</text>
</comment>
<comment type="subunit">
    <text>Homodimer.</text>
</comment>
<comment type="similarity">
    <text evidence="1">Belongs to the ROK (NagC/XylR) family.</text>
</comment>
<evidence type="ECO:0000305" key="1"/>
<dbReference type="EC" id="2.7.1.2"/>
<dbReference type="EC" id="2.7.1.7"/>
<dbReference type="SMR" id="P82680"/>
<dbReference type="UniPathway" id="UPA00109">
    <property type="reaction ID" value="UER00180"/>
</dbReference>
<dbReference type="UniPathway" id="UPA00339"/>
<dbReference type="GO" id="GO:0005524">
    <property type="term" value="F:ATP binding"/>
    <property type="evidence" value="ECO:0007669"/>
    <property type="project" value="UniProtKB-KW"/>
</dbReference>
<dbReference type="GO" id="GO:0004340">
    <property type="term" value="F:glucokinase activity"/>
    <property type="evidence" value="ECO:0007669"/>
    <property type="project" value="UniProtKB-EC"/>
</dbReference>
<dbReference type="GO" id="GO:0019158">
    <property type="term" value="F:mannokinase activity"/>
    <property type="evidence" value="ECO:0007669"/>
    <property type="project" value="UniProtKB-EC"/>
</dbReference>
<dbReference type="GO" id="GO:0006096">
    <property type="term" value="P:glycolytic process"/>
    <property type="evidence" value="ECO:0007669"/>
    <property type="project" value="UniProtKB-UniPathway"/>
</dbReference>
<dbReference type="GO" id="GO:0006013">
    <property type="term" value="P:mannose metabolic process"/>
    <property type="evidence" value="ECO:0007669"/>
    <property type="project" value="UniProtKB-UniPathway"/>
</dbReference>
<reference key="1">
    <citation type="journal article" date="2001" name="Microbiology">
        <title>The glucomannokinase of Prevotella bryantii B14 and its potential role in regulating beta-glucanase expression.</title>
        <authorList>
            <person name="Fields M.W."/>
            <person name="Russell J.B."/>
        </authorList>
    </citation>
    <scope>PROTEIN SEQUENCE</scope>
    <scope>CHARACTERIZATION</scope>
    <source>
        <strain>DSM 11371 / CIP 105474 / B14</strain>
    </source>
</reference>
<feature type="chain" id="PRO_0000095680" description="Glucomannokinase">
    <location>
        <begin position="1"/>
        <end position="25" status="greater than"/>
    </location>
</feature>
<feature type="non-terminal residue">
    <location>
        <position position="25"/>
    </location>
</feature>
<name>GLMK_SEGBR</name>
<organism>
    <name type="scientific">Segatella bryantii</name>
    <name type="common">Prevotella bryantii</name>
    <dbReference type="NCBI Taxonomy" id="77095"/>
    <lineage>
        <taxon>Bacteria</taxon>
        <taxon>Pseudomonadati</taxon>
        <taxon>Bacteroidota</taxon>
        <taxon>Bacteroidia</taxon>
        <taxon>Bacteroidales</taxon>
        <taxon>Prevotellaceae</taxon>
        <taxon>Segatella</taxon>
    </lineage>
</organism>
<keyword id="KW-0067">ATP-binding</keyword>
<keyword id="KW-0903">Direct protein sequencing</keyword>
<keyword id="KW-0324">Glycolysis</keyword>
<keyword id="KW-0418">Kinase</keyword>
<keyword id="KW-0511">Multifunctional enzyme</keyword>
<keyword id="KW-0547">Nucleotide-binding</keyword>
<keyword id="KW-0808">Transferase</keyword>
<accession>P82680</accession>
<sequence>MNEQSMKPYVIGLDLGGTNSVFGIV</sequence>
<proteinExistence type="evidence at protein level"/>